<evidence type="ECO:0000255" key="1">
    <source>
        <dbReference type="HAMAP-Rule" id="MF_00534"/>
    </source>
</evidence>
<organism>
    <name type="scientific">Alkaliphilus oremlandii (strain OhILAs)</name>
    <name type="common">Clostridium oremlandii (strain OhILAs)</name>
    <dbReference type="NCBI Taxonomy" id="350688"/>
    <lineage>
        <taxon>Bacteria</taxon>
        <taxon>Bacillati</taxon>
        <taxon>Bacillota</taxon>
        <taxon>Clostridia</taxon>
        <taxon>Peptostreptococcales</taxon>
        <taxon>Natronincolaceae</taxon>
        <taxon>Alkaliphilus</taxon>
    </lineage>
</organism>
<dbReference type="EC" id="6.1.1.22" evidence="1"/>
<dbReference type="EMBL" id="CP000853">
    <property type="protein sequence ID" value="ABW19873.1"/>
    <property type="molecule type" value="Genomic_DNA"/>
</dbReference>
<dbReference type="RefSeq" id="WP_012160180.1">
    <property type="nucleotide sequence ID" value="NC_009922.1"/>
</dbReference>
<dbReference type="SMR" id="A8MJ91"/>
<dbReference type="STRING" id="350688.Clos_2341"/>
<dbReference type="KEGG" id="aoe:Clos_2341"/>
<dbReference type="eggNOG" id="COG0017">
    <property type="taxonomic scope" value="Bacteria"/>
</dbReference>
<dbReference type="HOGENOM" id="CLU_004553_2_0_9"/>
<dbReference type="OrthoDB" id="9762036at2"/>
<dbReference type="Proteomes" id="UP000000269">
    <property type="component" value="Chromosome"/>
</dbReference>
<dbReference type="GO" id="GO:0005737">
    <property type="term" value="C:cytoplasm"/>
    <property type="evidence" value="ECO:0007669"/>
    <property type="project" value="UniProtKB-SubCell"/>
</dbReference>
<dbReference type="GO" id="GO:0004816">
    <property type="term" value="F:asparagine-tRNA ligase activity"/>
    <property type="evidence" value="ECO:0007669"/>
    <property type="project" value="UniProtKB-UniRule"/>
</dbReference>
<dbReference type="GO" id="GO:0005524">
    <property type="term" value="F:ATP binding"/>
    <property type="evidence" value="ECO:0007669"/>
    <property type="project" value="UniProtKB-UniRule"/>
</dbReference>
<dbReference type="GO" id="GO:0140096">
    <property type="term" value="F:catalytic activity, acting on a protein"/>
    <property type="evidence" value="ECO:0007669"/>
    <property type="project" value="UniProtKB-ARBA"/>
</dbReference>
<dbReference type="GO" id="GO:0003676">
    <property type="term" value="F:nucleic acid binding"/>
    <property type="evidence" value="ECO:0007669"/>
    <property type="project" value="InterPro"/>
</dbReference>
<dbReference type="GO" id="GO:0016740">
    <property type="term" value="F:transferase activity"/>
    <property type="evidence" value="ECO:0007669"/>
    <property type="project" value="UniProtKB-ARBA"/>
</dbReference>
<dbReference type="GO" id="GO:0006421">
    <property type="term" value="P:asparaginyl-tRNA aminoacylation"/>
    <property type="evidence" value="ECO:0007669"/>
    <property type="project" value="UniProtKB-UniRule"/>
</dbReference>
<dbReference type="CDD" id="cd00776">
    <property type="entry name" value="AsxRS_core"/>
    <property type="match status" value="1"/>
</dbReference>
<dbReference type="CDD" id="cd04318">
    <property type="entry name" value="EcAsnRS_like_N"/>
    <property type="match status" value="1"/>
</dbReference>
<dbReference type="FunFam" id="3.30.930.10:FF:000016">
    <property type="entry name" value="Asparagine--tRNA ligase"/>
    <property type="match status" value="1"/>
</dbReference>
<dbReference type="Gene3D" id="3.30.930.10">
    <property type="entry name" value="Bira Bifunctional Protein, Domain 2"/>
    <property type="match status" value="1"/>
</dbReference>
<dbReference type="Gene3D" id="2.40.50.140">
    <property type="entry name" value="Nucleic acid-binding proteins"/>
    <property type="match status" value="1"/>
</dbReference>
<dbReference type="HAMAP" id="MF_00534">
    <property type="entry name" value="Asn_tRNA_synth"/>
    <property type="match status" value="1"/>
</dbReference>
<dbReference type="InterPro" id="IPR004364">
    <property type="entry name" value="Aa-tRNA-synt_II"/>
</dbReference>
<dbReference type="InterPro" id="IPR006195">
    <property type="entry name" value="aa-tRNA-synth_II"/>
</dbReference>
<dbReference type="InterPro" id="IPR045864">
    <property type="entry name" value="aa-tRNA-synth_II/BPL/LPL"/>
</dbReference>
<dbReference type="InterPro" id="IPR004522">
    <property type="entry name" value="Asn-tRNA-ligase"/>
</dbReference>
<dbReference type="InterPro" id="IPR002312">
    <property type="entry name" value="Asp/Asn-tRNA-synth_IIb"/>
</dbReference>
<dbReference type="InterPro" id="IPR012340">
    <property type="entry name" value="NA-bd_OB-fold"/>
</dbReference>
<dbReference type="InterPro" id="IPR004365">
    <property type="entry name" value="NA-bd_OB_tRNA"/>
</dbReference>
<dbReference type="NCBIfam" id="TIGR00457">
    <property type="entry name" value="asnS"/>
    <property type="match status" value="1"/>
</dbReference>
<dbReference type="NCBIfam" id="NF003037">
    <property type="entry name" value="PRK03932.1"/>
    <property type="match status" value="1"/>
</dbReference>
<dbReference type="PANTHER" id="PTHR22594:SF34">
    <property type="entry name" value="ASPARAGINE--TRNA LIGASE, MITOCHONDRIAL-RELATED"/>
    <property type="match status" value="1"/>
</dbReference>
<dbReference type="PANTHER" id="PTHR22594">
    <property type="entry name" value="ASPARTYL/LYSYL-TRNA SYNTHETASE"/>
    <property type="match status" value="1"/>
</dbReference>
<dbReference type="Pfam" id="PF00152">
    <property type="entry name" value="tRNA-synt_2"/>
    <property type="match status" value="1"/>
</dbReference>
<dbReference type="Pfam" id="PF01336">
    <property type="entry name" value="tRNA_anti-codon"/>
    <property type="match status" value="1"/>
</dbReference>
<dbReference type="PRINTS" id="PR01042">
    <property type="entry name" value="TRNASYNTHASP"/>
</dbReference>
<dbReference type="SUPFAM" id="SSF55681">
    <property type="entry name" value="Class II aaRS and biotin synthetases"/>
    <property type="match status" value="1"/>
</dbReference>
<dbReference type="SUPFAM" id="SSF50249">
    <property type="entry name" value="Nucleic acid-binding proteins"/>
    <property type="match status" value="1"/>
</dbReference>
<dbReference type="PROSITE" id="PS50862">
    <property type="entry name" value="AA_TRNA_LIGASE_II"/>
    <property type="match status" value="1"/>
</dbReference>
<gene>
    <name evidence="1" type="primary">asnS</name>
    <name type="ordered locus">Clos_2341</name>
</gene>
<sequence>MKSILVKDIYRNTEKYAGQEIVIEGWIRTLRASKAFGFIEVNDGSFFKNIQVVFEEGLENFAEVSKLSISTAIIVKGKLEITPDAKQPFEIKATSIEVEGESDSDYPLQKKRHTFEFLREIAHLRPRSNTFSAVFRVRSLAAFAIHQFFQERGFVYTHTPIITGSDAEGAGEMFRITTLDPKNPGLNEAGEVDFTKDFFGKETSLTVSGQLQGEAYALAFRNIYTFGPTFRAENSHTARHASEFWMIEPEIAFADLQDNMELAEEMLKYIINYVMENAPEEMEFFNSFVDKGLLDRLNNVATSDFGRVTYTEAIEILQKSGETFEYPVAWGTDLQTEHERYLTEKVFKKPVFVTDYPKDIKAFYMKLNEDGKTVAAMDLLVPGIGEIIGGSQREDNLALLEERMDAMGLDKEEYWWYLELRKYGSARHAGYGLGFERAIMYLTGMSNIRDVISFPRTPKSAEF</sequence>
<keyword id="KW-0030">Aminoacyl-tRNA synthetase</keyword>
<keyword id="KW-0067">ATP-binding</keyword>
<keyword id="KW-0963">Cytoplasm</keyword>
<keyword id="KW-0436">Ligase</keyword>
<keyword id="KW-0547">Nucleotide-binding</keyword>
<keyword id="KW-0648">Protein biosynthesis</keyword>
<keyword id="KW-1185">Reference proteome</keyword>
<comment type="catalytic activity">
    <reaction evidence="1">
        <text>tRNA(Asn) + L-asparagine + ATP = L-asparaginyl-tRNA(Asn) + AMP + diphosphate + H(+)</text>
        <dbReference type="Rhea" id="RHEA:11180"/>
        <dbReference type="Rhea" id="RHEA-COMP:9659"/>
        <dbReference type="Rhea" id="RHEA-COMP:9674"/>
        <dbReference type="ChEBI" id="CHEBI:15378"/>
        <dbReference type="ChEBI" id="CHEBI:30616"/>
        <dbReference type="ChEBI" id="CHEBI:33019"/>
        <dbReference type="ChEBI" id="CHEBI:58048"/>
        <dbReference type="ChEBI" id="CHEBI:78442"/>
        <dbReference type="ChEBI" id="CHEBI:78515"/>
        <dbReference type="ChEBI" id="CHEBI:456215"/>
        <dbReference type="EC" id="6.1.1.22"/>
    </reaction>
</comment>
<comment type="subunit">
    <text evidence="1">Homodimer.</text>
</comment>
<comment type="subcellular location">
    <subcellularLocation>
        <location evidence="1">Cytoplasm</location>
    </subcellularLocation>
</comment>
<comment type="similarity">
    <text evidence="1">Belongs to the class-II aminoacyl-tRNA synthetase family.</text>
</comment>
<reference key="1">
    <citation type="submission" date="2007-10" db="EMBL/GenBank/DDBJ databases">
        <title>Complete genome of Alkaliphilus oremlandii OhILAs.</title>
        <authorList>
            <person name="Copeland A."/>
            <person name="Lucas S."/>
            <person name="Lapidus A."/>
            <person name="Barry K."/>
            <person name="Detter J.C."/>
            <person name="Glavina del Rio T."/>
            <person name="Hammon N."/>
            <person name="Israni S."/>
            <person name="Dalin E."/>
            <person name="Tice H."/>
            <person name="Pitluck S."/>
            <person name="Chain P."/>
            <person name="Malfatti S."/>
            <person name="Shin M."/>
            <person name="Vergez L."/>
            <person name="Schmutz J."/>
            <person name="Larimer F."/>
            <person name="Land M."/>
            <person name="Hauser L."/>
            <person name="Kyrpides N."/>
            <person name="Mikhailova N."/>
            <person name="Stolz J.F."/>
            <person name="Dawson A."/>
            <person name="Fisher E."/>
            <person name="Crable B."/>
            <person name="Perera E."/>
            <person name="Lisak J."/>
            <person name="Ranganathan M."/>
            <person name="Basu P."/>
            <person name="Richardson P."/>
        </authorList>
    </citation>
    <scope>NUCLEOTIDE SEQUENCE [LARGE SCALE GENOMIC DNA]</scope>
    <source>
        <strain>OhILAs</strain>
    </source>
</reference>
<protein>
    <recommendedName>
        <fullName evidence="1">Asparagine--tRNA ligase</fullName>
        <ecNumber evidence="1">6.1.1.22</ecNumber>
    </recommendedName>
    <alternativeName>
        <fullName evidence="1">Asparaginyl-tRNA synthetase</fullName>
        <shortName evidence="1">AsnRS</shortName>
    </alternativeName>
</protein>
<proteinExistence type="inferred from homology"/>
<feature type="chain" id="PRO_1000061017" description="Asparagine--tRNA ligase">
    <location>
        <begin position="1"/>
        <end position="463"/>
    </location>
</feature>
<name>SYN_ALKOO</name>
<accession>A8MJ91</accession>